<sequence>MTIRPAYRPKIVKKRTKHFIRHQSDRYAKLSHKWRKPKGIDNRVRRRFKGQYLMPNIGYGSNKRTRHMLPTGFKKFLVHNVRELEVLLMQNRVYCGEIAHGVSSKKRKEIVERAKQLSVRLTNPNGRLRSQENE</sequence>
<protein>
    <recommendedName>
        <fullName evidence="1">Large ribosomal subunit protein eL32</fullName>
    </recommendedName>
    <alternativeName>
        <fullName>60S ribosomal protein L32</fullName>
    </alternativeName>
    <alternativeName>
        <fullName>Ribosomal protein 49</fullName>
    </alternativeName>
</protein>
<name>RL32_DROSI</name>
<gene>
    <name type="primary">RpL32</name>
    <name type="synonym">M(3)99D</name>
    <name type="synonym">rp49</name>
    <name type="ORF">GD17388</name>
</gene>
<accession>P61128</accession>
<accession>B4R1H5</accession>
<reference key="1">
    <citation type="journal article" date="2001" name="Genetics">
        <title>DNA variation at the rp49 gene region of Drosophila simulans: Evolutionary inferences from an unusual haplotype structure.</title>
        <authorList>
            <person name="Rozas J."/>
            <person name="Gullaud M."/>
            <person name="Blandin G."/>
            <person name="Aguade M."/>
        </authorList>
    </citation>
    <scope>NUCLEOTIDE SEQUENCE [GENOMIC DNA]</scope>
    <source>
        <strain>SimMz12</strain>
        <strain>SimMz16</strain>
        <strain>SimMz19</strain>
        <strain>SimMz22</strain>
        <strain>SimMz25</strain>
        <strain>SimMz33</strain>
        <strain>SimMz34</strain>
        <strain>SimMz35</strain>
        <strain>SimMz37</strain>
        <strain>SimMz39</strain>
        <strain>SimMz43</strain>
        <strain>SimMz47</strain>
        <strain>SimMz54</strain>
        <strain>SimMz7</strain>
        <strain>SimS1</strain>
        <strain>SimS12</strain>
        <strain>SimS13</strain>
        <strain>SimS16</strain>
        <strain>SimS18</strain>
        <strain>SimS22</strain>
        <strain>SimS36</strain>
        <strain>SimS41</strain>
        <strain>SimS6</strain>
        <strain>SimS9</strain>
    </source>
</reference>
<reference key="2">
    <citation type="journal article" date="2007" name="Nature">
        <title>Evolution of genes and genomes on the Drosophila phylogeny.</title>
        <authorList>
            <consortium name="Drosophila 12 genomes consortium"/>
        </authorList>
    </citation>
    <scope>NUCLEOTIDE SEQUENCE [LARGE SCALE GENOMIC DNA]</scope>
</reference>
<proteinExistence type="inferred from homology"/>
<comment type="similarity">
    <text evidence="1">Belongs to the eukaryotic ribosomal protein eL32 family.</text>
</comment>
<keyword id="KW-1185">Reference proteome</keyword>
<keyword id="KW-0687">Ribonucleoprotein</keyword>
<keyword id="KW-0689">Ribosomal protein</keyword>
<feature type="chain" id="PRO_0000131132" description="Large ribosomal subunit protein eL32">
    <location>
        <begin position="1"/>
        <end position="134"/>
    </location>
</feature>
<evidence type="ECO:0000305" key="1"/>
<dbReference type="EMBL" id="AJ309023">
    <property type="protein sequence ID" value="CAC44473.1"/>
    <property type="molecule type" value="Genomic_DNA"/>
</dbReference>
<dbReference type="EMBL" id="AJ309024">
    <property type="protein sequence ID" value="CAC44474.1"/>
    <property type="molecule type" value="Genomic_DNA"/>
</dbReference>
<dbReference type="EMBL" id="AJ309025">
    <property type="protein sequence ID" value="CAC44475.1"/>
    <property type="molecule type" value="Genomic_DNA"/>
</dbReference>
<dbReference type="EMBL" id="AJ309026">
    <property type="protein sequence ID" value="CAC44476.1"/>
    <property type="molecule type" value="Genomic_DNA"/>
</dbReference>
<dbReference type="EMBL" id="AJ309027">
    <property type="protein sequence ID" value="CAC44477.1"/>
    <property type="molecule type" value="Genomic_DNA"/>
</dbReference>
<dbReference type="EMBL" id="AJ309028">
    <property type="protein sequence ID" value="CAC44478.1"/>
    <property type="molecule type" value="Genomic_DNA"/>
</dbReference>
<dbReference type="EMBL" id="AJ309029">
    <property type="protein sequence ID" value="CAC44479.1"/>
    <property type="molecule type" value="Genomic_DNA"/>
</dbReference>
<dbReference type="EMBL" id="AJ309030">
    <property type="protein sequence ID" value="CAC44480.1"/>
    <property type="molecule type" value="Genomic_DNA"/>
</dbReference>
<dbReference type="EMBL" id="AJ309031">
    <property type="protein sequence ID" value="CAC44481.1"/>
    <property type="molecule type" value="Genomic_DNA"/>
</dbReference>
<dbReference type="EMBL" id="AJ309032">
    <property type="protein sequence ID" value="CAC44482.1"/>
    <property type="molecule type" value="Genomic_DNA"/>
</dbReference>
<dbReference type="EMBL" id="AJ309033">
    <property type="protein sequence ID" value="CAC44483.1"/>
    <property type="molecule type" value="Genomic_DNA"/>
</dbReference>
<dbReference type="EMBL" id="AJ309034">
    <property type="protein sequence ID" value="CAC44484.1"/>
    <property type="molecule type" value="Genomic_DNA"/>
</dbReference>
<dbReference type="EMBL" id="AJ309035">
    <property type="protein sequence ID" value="CAC44485.1"/>
    <property type="molecule type" value="Genomic_DNA"/>
</dbReference>
<dbReference type="EMBL" id="AJ309036">
    <property type="protein sequence ID" value="CAC44486.1"/>
    <property type="molecule type" value="Genomic_DNA"/>
</dbReference>
<dbReference type="EMBL" id="AJ309037">
    <property type="protein sequence ID" value="CAC44487.1"/>
    <property type="molecule type" value="Genomic_DNA"/>
</dbReference>
<dbReference type="EMBL" id="AJ309038">
    <property type="protein sequence ID" value="CAC44488.1"/>
    <property type="molecule type" value="Genomic_DNA"/>
</dbReference>
<dbReference type="EMBL" id="AJ309039">
    <property type="protein sequence ID" value="CAC44489.1"/>
    <property type="molecule type" value="Genomic_DNA"/>
</dbReference>
<dbReference type="EMBL" id="AJ309040">
    <property type="protein sequence ID" value="CAC44490.1"/>
    <property type="molecule type" value="Genomic_DNA"/>
</dbReference>
<dbReference type="EMBL" id="AJ309041">
    <property type="protein sequence ID" value="CAC44491.1"/>
    <property type="molecule type" value="Genomic_DNA"/>
</dbReference>
<dbReference type="EMBL" id="AJ309042">
    <property type="protein sequence ID" value="CAC44492.1"/>
    <property type="molecule type" value="Genomic_DNA"/>
</dbReference>
<dbReference type="EMBL" id="AJ309043">
    <property type="protein sequence ID" value="CAC44493.1"/>
    <property type="molecule type" value="Genomic_DNA"/>
</dbReference>
<dbReference type="EMBL" id="AJ309044">
    <property type="protein sequence ID" value="CAC44494.1"/>
    <property type="molecule type" value="Genomic_DNA"/>
</dbReference>
<dbReference type="EMBL" id="AJ309045">
    <property type="protein sequence ID" value="CAC44495.1"/>
    <property type="molecule type" value="Genomic_DNA"/>
</dbReference>
<dbReference type="EMBL" id="AJ309046">
    <property type="protein sequence ID" value="CAC44496.1"/>
    <property type="molecule type" value="Genomic_DNA"/>
</dbReference>
<dbReference type="EMBL" id="CM000364">
    <property type="protein sequence ID" value="EDX14963.1"/>
    <property type="molecule type" value="Genomic_DNA"/>
</dbReference>
<dbReference type="SMR" id="P61128"/>
<dbReference type="STRING" id="7240.P61128"/>
<dbReference type="EnsemblMetazoa" id="FBtr0217298">
    <property type="protein sequence ID" value="FBpp0215790"/>
    <property type="gene ID" value="FBgn0040418"/>
</dbReference>
<dbReference type="EnsemblMetazoa" id="FBtr0351669">
    <property type="protein sequence ID" value="FBpp0316304"/>
    <property type="gene ID" value="FBgn0040418"/>
</dbReference>
<dbReference type="EnsemblMetazoa" id="XM_016174141.2">
    <property type="protein sequence ID" value="XP_016036927.1"/>
    <property type="gene ID" value="LOC6730169"/>
</dbReference>
<dbReference type="EnsemblMetazoa" id="XM_016174142.3">
    <property type="protein sequence ID" value="XP_016036928.1"/>
    <property type="gene ID" value="LOC6730169"/>
</dbReference>
<dbReference type="GeneID" id="6730169"/>
<dbReference type="KEGG" id="dsi:Dsimw501_GD17388"/>
<dbReference type="CTD" id="6161"/>
<dbReference type="HOGENOM" id="CLU_071479_4_1_1"/>
<dbReference type="OMA" id="HPSGYEE"/>
<dbReference type="OrthoDB" id="268693at2759"/>
<dbReference type="PhylomeDB" id="P61128"/>
<dbReference type="ChiTaRS" id="RpL32">
    <property type="organism name" value="fly"/>
</dbReference>
<dbReference type="Proteomes" id="UP000000304">
    <property type="component" value="Chromosome 3R"/>
</dbReference>
<dbReference type="Bgee" id="FBgn0040418">
    <property type="expression patterns" value="Expressed in embryo and 3 other cell types or tissues"/>
</dbReference>
<dbReference type="GO" id="GO:0022625">
    <property type="term" value="C:cytosolic large ribosomal subunit"/>
    <property type="evidence" value="ECO:0007669"/>
    <property type="project" value="TreeGrafter"/>
</dbReference>
<dbReference type="GO" id="GO:0003735">
    <property type="term" value="F:structural constituent of ribosome"/>
    <property type="evidence" value="ECO:0007669"/>
    <property type="project" value="InterPro"/>
</dbReference>
<dbReference type="GO" id="GO:0006412">
    <property type="term" value="P:translation"/>
    <property type="evidence" value="ECO:0007669"/>
    <property type="project" value="InterPro"/>
</dbReference>
<dbReference type="CDD" id="cd00513">
    <property type="entry name" value="Ribosomal_L32_L32e"/>
    <property type="match status" value="1"/>
</dbReference>
<dbReference type="InterPro" id="IPR001515">
    <property type="entry name" value="Ribosomal_eL32"/>
</dbReference>
<dbReference type="InterPro" id="IPR018263">
    <property type="entry name" value="Ribosomal_eL32_CS"/>
</dbReference>
<dbReference type="InterPro" id="IPR036351">
    <property type="entry name" value="Ribosomal_eL32_sf"/>
</dbReference>
<dbReference type="PANTHER" id="PTHR23413">
    <property type="entry name" value="60S RIBOSOMAL PROTEIN L32 AND DNA-DIRECTED RNA POLYMERASE II, SUBUNIT N"/>
    <property type="match status" value="1"/>
</dbReference>
<dbReference type="PANTHER" id="PTHR23413:SF1">
    <property type="entry name" value="RIBOSOMAL PROTEIN L32"/>
    <property type="match status" value="1"/>
</dbReference>
<dbReference type="Pfam" id="PF01655">
    <property type="entry name" value="Ribosomal_L32e"/>
    <property type="match status" value="1"/>
</dbReference>
<dbReference type="SMART" id="SM01393">
    <property type="entry name" value="Ribosomal_L32e"/>
    <property type="match status" value="1"/>
</dbReference>
<dbReference type="SUPFAM" id="SSF52042">
    <property type="entry name" value="Ribosomal protein L32e"/>
    <property type="match status" value="1"/>
</dbReference>
<dbReference type="PROSITE" id="PS00580">
    <property type="entry name" value="RIBOSOMAL_L32E"/>
    <property type="match status" value="1"/>
</dbReference>
<organism>
    <name type="scientific">Drosophila simulans</name>
    <name type="common">Fruit fly</name>
    <dbReference type="NCBI Taxonomy" id="7240"/>
    <lineage>
        <taxon>Eukaryota</taxon>
        <taxon>Metazoa</taxon>
        <taxon>Ecdysozoa</taxon>
        <taxon>Arthropoda</taxon>
        <taxon>Hexapoda</taxon>
        <taxon>Insecta</taxon>
        <taxon>Pterygota</taxon>
        <taxon>Neoptera</taxon>
        <taxon>Endopterygota</taxon>
        <taxon>Diptera</taxon>
        <taxon>Brachycera</taxon>
        <taxon>Muscomorpha</taxon>
        <taxon>Ephydroidea</taxon>
        <taxon>Drosophilidae</taxon>
        <taxon>Drosophila</taxon>
        <taxon>Sophophora</taxon>
    </lineage>
</organism>